<dbReference type="EC" id="4.2.99.22"/>
<dbReference type="EMBL" id="AB749806">
    <property type="protein sequence ID" value="BAN28565.1"/>
    <property type="molecule type" value="mRNA"/>
</dbReference>
<dbReference type="EMBL" id="AB749812">
    <property type="protein sequence ID" value="BAN28571.1"/>
    <property type="molecule type" value="mRNA"/>
</dbReference>
<dbReference type="SMR" id="R4X244"/>
<dbReference type="ESTHER" id="tulge-tcab1">
    <property type="family name" value="Plant_carboxylesterase"/>
</dbReference>
<dbReference type="BRENDA" id="4.2.99.22">
    <property type="organism ID" value="6538"/>
</dbReference>
<dbReference type="GO" id="GO:0009501">
    <property type="term" value="C:amyloplast"/>
    <property type="evidence" value="ECO:0007669"/>
    <property type="project" value="UniProtKB-SubCell"/>
</dbReference>
<dbReference type="GO" id="GO:0016787">
    <property type="term" value="F:hydrolase activity"/>
    <property type="evidence" value="ECO:0007669"/>
    <property type="project" value="InterPro"/>
</dbReference>
<dbReference type="GO" id="GO:0016829">
    <property type="term" value="F:lyase activity"/>
    <property type="evidence" value="ECO:0007669"/>
    <property type="project" value="UniProtKB-KW"/>
</dbReference>
<dbReference type="GO" id="GO:0006952">
    <property type="term" value="P:defense response"/>
    <property type="evidence" value="ECO:0007669"/>
    <property type="project" value="UniProtKB-KW"/>
</dbReference>
<dbReference type="Gene3D" id="3.40.50.1820">
    <property type="entry name" value="alpha/beta hydrolase"/>
    <property type="match status" value="1"/>
</dbReference>
<dbReference type="InterPro" id="IPR013094">
    <property type="entry name" value="AB_hydrolase_3"/>
</dbReference>
<dbReference type="InterPro" id="IPR029058">
    <property type="entry name" value="AB_hydrolase_fold"/>
</dbReference>
<dbReference type="InterPro" id="IPR050466">
    <property type="entry name" value="Carboxylest/Gibb_receptor"/>
</dbReference>
<dbReference type="PANTHER" id="PTHR23024">
    <property type="entry name" value="ARYLACETAMIDE DEACETYLASE"/>
    <property type="match status" value="1"/>
</dbReference>
<dbReference type="PANTHER" id="PTHR23024:SF577">
    <property type="entry name" value="CARBOXYLESTERASE 2-RELATED"/>
    <property type="match status" value="1"/>
</dbReference>
<dbReference type="Pfam" id="PF07859">
    <property type="entry name" value="Abhydrolase_3"/>
    <property type="match status" value="1"/>
</dbReference>
<dbReference type="SUPFAM" id="SSF53474">
    <property type="entry name" value="alpha/beta-Hydrolases"/>
    <property type="match status" value="1"/>
</dbReference>
<proteinExistence type="evidence at protein level"/>
<feature type="transit peptide" description="Amyloplast" evidence="2">
    <location>
        <begin position="1"/>
        <end position="68"/>
    </location>
</feature>
<feature type="chain" id="PRO_0000423867" description="Tuliposide A-converting enzyme b1, amyloplastic">
    <location>
        <begin position="69"/>
        <end position="374"/>
    </location>
</feature>
<feature type="active site" description="Acyl-ester intermediate" evidence="1">
    <location>
        <position position="226"/>
    </location>
</feature>
<feature type="active site" description="Charge relay system" evidence="1">
    <location>
        <position position="316"/>
    </location>
</feature>
<feature type="active site" description="Charge relay system" evidence="1">
    <location>
        <position position="348"/>
    </location>
</feature>
<feature type="sequence conflict" description="In Ref. 1; BAN28571." evidence="3" ref="1">
    <original>A</original>
    <variation>T</variation>
    <location>
        <position position="12"/>
    </location>
</feature>
<gene>
    <name type="primary">TCEA-B1</name>
    <name type="synonym">TCEA-B7</name>
</gene>
<protein>
    <recommendedName>
        <fullName>Tuliposide A-converting enzyme b1, amyloplastic</fullName>
        <shortName>TgTCEA-b1</shortName>
        <ecNumber>4.2.99.22</ecNumber>
    </recommendedName>
</protein>
<name>TCAB1_TULGE</name>
<comment type="function">
    <text>Lactone-forming carboxylesterases, specifically catalyzing intramolecular transesterification, but not hydrolysis. Involved in the biosynthesis of tulipalins, defensive chemicals that show antimicrobial activities against a broad range of strains of bacteria and fungi. Substrates are 6-tuliposide A &gt; 6-tuliposide B.</text>
</comment>
<comment type="catalytic activity">
    <reaction>
        <text>6-tuliposide A = tulipalin A + D-glucose</text>
        <dbReference type="Rhea" id="RHEA:36071"/>
        <dbReference type="ChEBI" id="CHEBI:4167"/>
        <dbReference type="ChEBI" id="CHEBI:72781"/>
        <dbReference type="ChEBI" id="CHEBI:104120"/>
        <dbReference type="EC" id="4.2.99.22"/>
    </reaction>
</comment>
<comment type="biophysicochemical properties">
    <kinetics>
        <KM evidence="2">12 mM for 6-tuliposide A</KM>
        <KM evidence="2">96 mM for 6-tuliposide B</KM>
        <text>kcat is 1400 sec(-1) with 6-tuliposide A as substrate. kcat is 610 sec(-1) with 6-tuliposide B as substrate.</text>
    </kinetics>
</comment>
<comment type="subunit">
    <text evidence="2">Homodimer.</text>
</comment>
<comment type="subcellular location">
    <subcellularLocation>
        <location evidence="2">Plastid</location>
        <location evidence="2">Amyloplast</location>
    </subcellularLocation>
</comment>
<comment type="tissue specificity">
    <text evidence="2">Highly expressed in pistil and bulb scales. Lower expression in stem, and barely detected in root, leaf, petal and stamen.</text>
</comment>
<comment type="miscellaneous">
    <text evidence="4">6-tuliposide A and tuliposide A-converting enzyme, which are compartmentalized in the vacuoles and plastids respectively, come into contact with each other for the enzyme reaction releasing toxic tulipalin A upon cell disruption by pathogen infection or herbivore predation.</text>
</comment>
<comment type="similarity">
    <text evidence="3">Belongs to the AB hydrolase superfamily.</text>
</comment>
<organism>
    <name type="scientific">Tulipa gesneriana</name>
    <name type="common">Garden tulip</name>
    <dbReference type="NCBI Taxonomy" id="13306"/>
    <lineage>
        <taxon>Eukaryota</taxon>
        <taxon>Viridiplantae</taxon>
        <taxon>Streptophyta</taxon>
        <taxon>Embryophyta</taxon>
        <taxon>Tracheophyta</taxon>
        <taxon>Spermatophyta</taxon>
        <taxon>Magnoliopsida</taxon>
        <taxon>Liliopsida</taxon>
        <taxon>Liliales</taxon>
        <taxon>Liliaceae</taxon>
        <taxon>Tulipa</taxon>
    </lineage>
</organism>
<sequence>MSVALFCGPPPAVSFGCKDGRGRKGMVRSKDIVRQTVKPPAHACRLIGWNKYPGSVVPTNSSLSPSPTALDDEIELDLSPFLIIYKDGRIERLKGTTVIPACPEVATKDVIIDPATGVSVRLYLPNVVDLPSKKLPVLVYFHGGGFVIENTGSPNYHNYLTLLAAKSGLLIVSVNYRLAPEHPIPASFDDCMAGFNWVVSHSAGPAPEPWLARHGDLTQILISGDSAGGTVTHYVLLRADAGVIEGAALVHPYFLGSKRLENQTEEDFEFHEKLWRLSTPDTEGLDDPLINPLAPGAPSLAGLKCKRAVVFVAELDFLVERGRMYYDALVKSGWGGKAELVHQEGVGHVFHLSDYSGDVSVDMMAKMVAFLRGE</sequence>
<accession>R4X244</accession>
<accession>R4X4V8</accession>
<evidence type="ECO:0000250" key="1"/>
<evidence type="ECO:0000269" key="2">
    <source>
    </source>
</evidence>
<evidence type="ECO:0000305" key="3"/>
<evidence type="ECO:0000305" key="4">
    <source>
    </source>
</evidence>
<keyword id="KW-0035">Amyloplast</keyword>
<keyword id="KW-0903">Direct protein sequencing</keyword>
<keyword id="KW-0456">Lyase</keyword>
<keyword id="KW-0611">Plant defense</keyword>
<keyword id="KW-0934">Plastid</keyword>
<keyword id="KW-0809">Transit peptide</keyword>
<reference key="1">
    <citation type="journal article" date="2013" name="Biosci. Biotechnol. Biochem.">
        <title>Molecular diversity of tuliposide A-converting enzyme in the tulip.</title>
        <authorList>
            <person name="Nomura T."/>
            <person name="Tsuchigami A."/>
            <person name="Ogita S."/>
            <person name="Kato Y."/>
        </authorList>
    </citation>
    <scope>NUCLEOTIDE SEQUENCE [GENOMIC DNA / MRNA]</scope>
    <scope>PROTEIN SEQUENCE OF N-TERMINUS</scope>
    <scope>SUBUNIT</scope>
    <scope>BIOPHYSICOCHEMICAL PROPERTIES</scope>
    <scope>TISSUE SPECIFICITY</scope>
    <scope>SUBCELLULAR LOCATION</scope>
    <source>
        <tissue>Bulb</tissue>
    </source>
</reference>